<evidence type="ECO:0000255" key="1">
    <source>
        <dbReference type="HAMAP-Rule" id="MF_00086"/>
    </source>
</evidence>
<feature type="chain" id="PRO_0000174538" description="S-adenosylmethionine synthase">
    <location>
        <begin position="1"/>
        <end position="382"/>
    </location>
</feature>
<feature type="region of interest" description="Flexible loop" evidence="1">
    <location>
        <begin position="100"/>
        <end position="110"/>
    </location>
</feature>
<feature type="binding site" description="in other chain" evidence="1">
    <location>
        <position position="16"/>
    </location>
    <ligand>
        <name>ATP</name>
        <dbReference type="ChEBI" id="CHEBI:30616"/>
        <note>ligand shared between two neighboring subunits</note>
    </ligand>
</feature>
<feature type="binding site" evidence="1">
    <location>
        <position position="18"/>
    </location>
    <ligand>
        <name>Mg(2+)</name>
        <dbReference type="ChEBI" id="CHEBI:18420"/>
    </ligand>
</feature>
<feature type="binding site" evidence="1">
    <location>
        <position position="44"/>
    </location>
    <ligand>
        <name>K(+)</name>
        <dbReference type="ChEBI" id="CHEBI:29103"/>
    </ligand>
</feature>
<feature type="binding site" description="in other chain" evidence="1">
    <location>
        <position position="57"/>
    </location>
    <ligand>
        <name>L-methionine</name>
        <dbReference type="ChEBI" id="CHEBI:57844"/>
        <note>ligand shared between two neighboring subunits</note>
    </ligand>
</feature>
<feature type="binding site" description="in other chain" evidence="1">
    <location>
        <position position="100"/>
    </location>
    <ligand>
        <name>L-methionine</name>
        <dbReference type="ChEBI" id="CHEBI:57844"/>
        <note>ligand shared between two neighboring subunits</note>
    </ligand>
</feature>
<feature type="binding site" description="in other chain" evidence="1">
    <location>
        <begin position="165"/>
        <end position="167"/>
    </location>
    <ligand>
        <name>ATP</name>
        <dbReference type="ChEBI" id="CHEBI:30616"/>
        <note>ligand shared between two neighboring subunits</note>
    </ligand>
</feature>
<feature type="binding site" description="in other chain" evidence="1">
    <location>
        <begin position="231"/>
        <end position="232"/>
    </location>
    <ligand>
        <name>ATP</name>
        <dbReference type="ChEBI" id="CHEBI:30616"/>
        <note>ligand shared between two neighboring subunits</note>
    </ligand>
</feature>
<feature type="binding site" evidence="1">
    <location>
        <position position="240"/>
    </location>
    <ligand>
        <name>ATP</name>
        <dbReference type="ChEBI" id="CHEBI:30616"/>
        <note>ligand shared between two neighboring subunits</note>
    </ligand>
</feature>
<feature type="binding site" evidence="1">
    <location>
        <position position="240"/>
    </location>
    <ligand>
        <name>L-methionine</name>
        <dbReference type="ChEBI" id="CHEBI:57844"/>
        <note>ligand shared between two neighboring subunits</note>
    </ligand>
</feature>
<feature type="binding site" description="in other chain" evidence="1">
    <location>
        <begin position="246"/>
        <end position="247"/>
    </location>
    <ligand>
        <name>ATP</name>
        <dbReference type="ChEBI" id="CHEBI:30616"/>
        <note>ligand shared between two neighboring subunits</note>
    </ligand>
</feature>
<feature type="binding site" evidence="1">
    <location>
        <position position="267"/>
    </location>
    <ligand>
        <name>ATP</name>
        <dbReference type="ChEBI" id="CHEBI:30616"/>
        <note>ligand shared between two neighboring subunits</note>
    </ligand>
</feature>
<feature type="binding site" description="in other chain" evidence="1">
    <location>
        <position position="271"/>
    </location>
    <ligand>
        <name>L-methionine</name>
        <dbReference type="ChEBI" id="CHEBI:57844"/>
        <note>ligand shared between two neighboring subunits</note>
    </ligand>
</feature>
<organism>
    <name type="scientific">Legionella pneumophila subsp. pneumophila (strain Philadelphia 1 / ATCC 33152 / DSM 7513)</name>
    <dbReference type="NCBI Taxonomy" id="272624"/>
    <lineage>
        <taxon>Bacteria</taxon>
        <taxon>Pseudomonadati</taxon>
        <taxon>Pseudomonadota</taxon>
        <taxon>Gammaproteobacteria</taxon>
        <taxon>Legionellales</taxon>
        <taxon>Legionellaceae</taxon>
        <taxon>Legionella</taxon>
    </lineage>
</organism>
<keyword id="KW-0067">ATP-binding</keyword>
<keyword id="KW-0963">Cytoplasm</keyword>
<keyword id="KW-0460">Magnesium</keyword>
<keyword id="KW-0479">Metal-binding</keyword>
<keyword id="KW-0547">Nucleotide-binding</keyword>
<keyword id="KW-0554">One-carbon metabolism</keyword>
<keyword id="KW-0630">Potassium</keyword>
<keyword id="KW-1185">Reference proteome</keyword>
<keyword id="KW-0808">Transferase</keyword>
<protein>
    <recommendedName>
        <fullName evidence="1">S-adenosylmethionine synthase</fullName>
        <shortName evidence="1">AdoMet synthase</shortName>
        <ecNumber evidence="1">2.5.1.6</ecNumber>
    </recommendedName>
    <alternativeName>
        <fullName evidence="1">MAT</fullName>
    </alternativeName>
    <alternativeName>
        <fullName evidence="1">Methionine adenosyltransferase</fullName>
    </alternativeName>
</protein>
<reference key="1">
    <citation type="journal article" date="2004" name="Science">
        <title>The genomic sequence of the accidental pathogen Legionella pneumophila.</title>
        <authorList>
            <person name="Chien M."/>
            <person name="Morozova I."/>
            <person name="Shi S."/>
            <person name="Sheng H."/>
            <person name="Chen J."/>
            <person name="Gomez S.M."/>
            <person name="Asamani G."/>
            <person name="Hill K."/>
            <person name="Nuara J."/>
            <person name="Feder M."/>
            <person name="Rineer J."/>
            <person name="Greenberg J.J."/>
            <person name="Steshenko V."/>
            <person name="Park S.H."/>
            <person name="Zhao B."/>
            <person name="Teplitskaya E."/>
            <person name="Edwards J.R."/>
            <person name="Pampou S."/>
            <person name="Georghiou A."/>
            <person name="Chou I.-C."/>
            <person name="Iannuccilli W."/>
            <person name="Ulz M.E."/>
            <person name="Kim D.H."/>
            <person name="Geringer-Sameth A."/>
            <person name="Goldsberry C."/>
            <person name="Morozov P."/>
            <person name="Fischer S.G."/>
            <person name="Segal G."/>
            <person name="Qu X."/>
            <person name="Rzhetsky A."/>
            <person name="Zhang P."/>
            <person name="Cayanis E."/>
            <person name="De Jong P.J."/>
            <person name="Ju J."/>
            <person name="Kalachikov S."/>
            <person name="Shuman H.A."/>
            <person name="Russo J.J."/>
        </authorList>
    </citation>
    <scope>NUCLEOTIDE SEQUENCE [LARGE SCALE GENOMIC DNA]</scope>
    <source>
        <strain>Philadelphia 1 / ATCC 33152 / DSM 7513</strain>
    </source>
</reference>
<dbReference type="EC" id="2.5.1.6" evidence="1"/>
<dbReference type="EMBL" id="AE017354">
    <property type="protein sequence ID" value="AAU28091.1"/>
    <property type="molecule type" value="Genomic_DNA"/>
</dbReference>
<dbReference type="RefSeq" id="WP_010947738.1">
    <property type="nucleotide sequence ID" value="NC_002942.5"/>
</dbReference>
<dbReference type="RefSeq" id="YP_096038.1">
    <property type="nucleotide sequence ID" value="NC_002942.5"/>
</dbReference>
<dbReference type="SMR" id="Q5ZTY6"/>
<dbReference type="STRING" id="272624.lpg2022"/>
<dbReference type="PaxDb" id="272624-lpg2022"/>
<dbReference type="GeneID" id="57036016"/>
<dbReference type="KEGG" id="lpn:lpg2022"/>
<dbReference type="PATRIC" id="fig|272624.6.peg.2117"/>
<dbReference type="eggNOG" id="COG0192">
    <property type="taxonomic scope" value="Bacteria"/>
</dbReference>
<dbReference type="HOGENOM" id="CLU_041802_1_1_6"/>
<dbReference type="OrthoDB" id="9801686at2"/>
<dbReference type="UniPathway" id="UPA00315">
    <property type="reaction ID" value="UER00080"/>
</dbReference>
<dbReference type="Proteomes" id="UP000000609">
    <property type="component" value="Chromosome"/>
</dbReference>
<dbReference type="GO" id="GO:0005737">
    <property type="term" value="C:cytoplasm"/>
    <property type="evidence" value="ECO:0007669"/>
    <property type="project" value="UniProtKB-SubCell"/>
</dbReference>
<dbReference type="GO" id="GO:0005524">
    <property type="term" value="F:ATP binding"/>
    <property type="evidence" value="ECO:0007669"/>
    <property type="project" value="UniProtKB-UniRule"/>
</dbReference>
<dbReference type="GO" id="GO:0000287">
    <property type="term" value="F:magnesium ion binding"/>
    <property type="evidence" value="ECO:0007669"/>
    <property type="project" value="UniProtKB-UniRule"/>
</dbReference>
<dbReference type="GO" id="GO:0004478">
    <property type="term" value="F:methionine adenosyltransferase activity"/>
    <property type="evidence" value="ECO:0007669"/>
    <property type="project" value="UniProtKB-UniRule"/>
</dbReference>
<dbReference type="GO" id="GO:0006730">
    <property type="term" value="P:one-carbon metabolic process"/>
    <property type="evidence" value="ECO:0007669"/>
    <property type="project" value="UniProtKB-KW"/>
</dbReference>
<dbReference type="GO" id="GO:0006556">
    <property type="term" value="P:S-adenosylmethionine biosynthetic process"/>
    <property type="evidence" value="ECO:0007669"/>
    <property type="project" value="UniProtKB-UniRule"/>
</dbReference>
<dbReference type="CDD" id="cd18079">
    <property type="entry name" value="S-AdoMet_synt"/>
    <property type="match status" value="1"/>
</dbReference>
<dbReference type="FunFam" id="3.30.300.10:FF:000001">
    <property type="entry name" value="S-adenosylmethionine synthase"/>
    <property type="match status" value="1"/>
</dbReference>
<dbReference type="FunFam" id="3.30.300.10:FF:000003">
    <property type="entry name" value="S-adenosylmethionine synthase"/>
    <property type="match status" value="1"/>
</dbReference>
<dbReference type="Gene3D" id="3.30.300.10">
    <property type="match status" value="3"/>
</dbReference>
<dbReference type="HAMAP" id="MF_00086">
    <property type="entry name" value="S_AdoMet_synth1"/>
    <property type="match status" value="1"/>
</dbReference>
<dbReference type="InterPro" id="IPR022631">
    <property type="entry name" value="ADOMET_SYNTHASE_CS"/>
</dbReference>
<dbReference type="InterPro" id="IPR022630">
    <property type="entry name" value="S-AdoMet_synt_C"/>
</dbReference>
<dbReference type="InterPro" id="IPR022629">
    <property type="entry name" value="S-AdoMet_synt_central"/>
</dbReference>
<dbReference type="InterPro" id="IPR022628">
    <property type="entry name" value="S-AdoMet_synt_N"/>
</dbReference>
<dbReference type="InterPro" id="IPR002133">
    <property type="entry name" value="S-AdoMet_synthetase"/>
</dbReference>
<dbReference type="InterPro" id="IPR022636">
    <property type="entry name" value="S-AdoMet_synthetase_sfam"/>
</dbReference>
<dbReference type="NCBIfam" id="TIGR01034">
    <property type="entry name" value="metK"/>
    <property type="match status" value="1"/>
</dbReference>
<dbReference type="PANTHER" id="PTHR11964">
    <property type="entry name" value="S-ADENOSYLMETHIONINE SYNTHETASE"/>
    <property type="match status" value="1"/>
</dbReference>
<dbReference type="Pfam" id="PF02773">
    <property type="entry name" value="S-AdoMet_synt_C"/>
    <property type="match status" value="1"/>
</dbReference>
<dbReference type="Pfam" id="PF02772">
    <property type="entry name" value="S-AdoMet_synt_M"/>
    <property type="match status" value="1"/>
</dbReference>
<dbReference type="Pfam" id="PF00438">
    <property type="entry name" value="S-AdoMet_synt_N"/>
    <property type="match status" value="1"/>
</dbReference>
<dbReference type="PIRSF" id="PIRSF000497">
    <property type="entry name" value="MAT"/>
    <property type="match status" value="1"/>
</dbReference>
<dbReference type="SUPFAM" id="SSF55973">
    <property type="entry name" value="S-adenosylmethionine synthetase"/>
    <property type="match status" value="3"/>
</dbReference>
<dbReference type="PROSITE" id="PS00376">
    <property type="entry name" value="ADOMET_SYNTHASE_1"/>
    <property type="match status" value="1"/>
</dbReference>
<dbReference type="PROSITE" id="PS00377">
    <property type="entry name" value="ADOMET_SYNTHASE_2"/>
    <property type="match status" value="1"/>
</dbReference>
<gene>
    <name evidence="1" type="primary">metK</name>
    <name type="ordered locus">lpg2022</name>
</gene>
<proteinExistence type="inferred from homology"/>
<name>METK_LEGPH</name>
<accession>Q5ZTY6</accession>
<sequence>MNEVYVFTSESVSEGHPDKIADQISDAILDAILAQDPKARVACEVLVKTGMVLVGGEITTKAWVDVEEITRHVIKDIGYNSSQMGFDWESCAVLSAIGKQSPDIAQGVDNQQTKILGAGDQGLMFGYASRETDVFMPAPIAYAHRLMEKLAKARKSGQLPWLRPDAKCQLTLKYEQGMPVEVDTVVFSTQHSPDIEHKDLVEAIREEIIKSVLPAEWLNDKTRYFINPTGRFVIGGPLGDCGLTGRKIIVDTYGGMARHGGGCFSGKDPSKVDRSAAYAARHVAKNIVAAGLADKCELQISYAIGVAEPTSIFVDTFGTGRLKNSEIIDLIHTHFDLTPQGIIDQHDLLRPIYRQTATYGHYGRESFPWERLDKVAELSKAL</sequence>
<comment type="function">
    <text evidence="1">Catalyzes the formation of S-adenosylmethionine (AdoMet) from methionine and ATP. The overall synthetic reaction is composed of two sequential steps, AdoMet formation and the subsequent tripolyphosphate hydrolysis which occurs prior to release of AdoMet from the enzyme.</text>
</comment>
<comment type="catalytic activity">
    <reaction evidence="1">
        <text>L-methionine + ATP + H2O = S-adenosyl-L-methionine + phosphate + diphosphate</text>
        <dbReference type="Rhea" id="RHEA:21080"/>
        <dbReference type="ChEBI" id="CHEBI:15377"/>
        <dbReference type="ChEBI" id="CHEBI:30616"/>
        <dbReference type="ChEBI" id="CHEBI:33019"/>
        <dbReference type="ChEBI" id="CHEBI:43474"/>
        <dbReference type="ChEBI" id="CHEBI:57844"/>
        <dbReference type="ChEBI" id="CHEBI:59789"/>
        <dbReference type="EC" id="2.5.1.6"/>
    </reaction>
</comment>
<comment type="cofactor">
    <cofactor evidence="1">
        <name>Mg(2+)</name>
        <dbReference type="ChEBI" id="CHEBI:18420"/>
    </cofactor>
    <text evidence="1">Binds 2 divalent ions per subunit.</text>
</comment>
<comment type="cofactor">
    <cofactor evidence="1">
        <name>K(+)</name>
        <dbReference type="ChEBI" id="CHEBI:29103"/>
    </cofactor>
    <text evidence="1">Binds 1 potassium ion per subunit.</text>
</comment>
<comment type="pathway">
    <text evidence="1">Amino-acid biosynthesis; S-adenosyl-L-methionine biosynthesis; S-adenosyl-L-methionine from L-methionine: step 1/1.</text>
</comment>
<comment type="subunit">
    <text evidence="1">Homotetramer; dimer of dimers.</text>
</comment>
<comment type="subcellular location">
    <subcellularLocation>
        <location evidence="1">Cytoplasm</location>
    </subcellularLocation>
</comment>
<comment type="similarity">
    <text evidence="1">Belongs to the AdoMet synthase family.</text>
</comment>